<sequence length="422" mass="45457">MSSQVVGIEPLYIKAEPASPDSPKGSSETETEPPVALAPGPAPTRCLPGHKEEEDGEGAGPGEQGGGKLVLSSLPKRLCLVCGDVASGYHYGVASCEACKAFFKRTIQGSIEYSCPASNECEITKRRRKACQACRFTKCLRVGMLKEGVRLDRVRGGRQKYKRRPEVDPLPFPGSFPAGPLAVAGGPRKTAPVNALVSHLLVVEPEKLYAMPDPAGPDGHLPAVATLCDLFDREIVVTISWAKSIPGFSSLSLSDQMSVLQSVWMEVLVLGVAQRSLPLQDELAFAEDLVLDEEGARAAGLGELGAVLLQLVRRLQALRLEREEYVLLKALALANSDSVHIEDAEAVEQLREALHEALLEYEAGRAGPGGGAERRRAGRLLLTLPLLRQTAGKVLAHFYGVKLEGKVPMHKLFLEMLEAMMD</sequence>
<proteinExistence type="evidence at transcript level"/>
<protein>
    <recommendedName>
        <fullName>Steroid hormone receptor ERR1</fullName>
    </recommendedName>
    <alternativeName>
        <fullName>Estrogen-related receptor alpha</fullName>
        <shortName>ERR-alpha</shortName>
    </alternativeName>
    <alternativeName>
        <fullName>Nuclear receptor subfamily 3 group B member 1</fullName>
    </alternativeName>
</protein>
<feature type="chain" id="PRO_0000295231" description="Steroid hormone receptor ERR1">
    <location>
        <begin position="1"/>
        <end position="422"/>
    </location>
</feature>
<feature type="domain" description="NR LBD" evidence="4">
    <location>
        <begin position="192"/>
        <end position="420"/>
    </location>
</feature>
<feature type="DNA-binding region" description="Nuclear receptor" evidence="3">
    <location>
        <begin position="76"/>
        <end position="151"/>
    </location>
</feature>
<feature type="zinc finger region" description="NR C4-type" evidence="3">
    <location>
        <begin position="79"/>
        <end position="99"/>
    </location>
</feature>
<feature type="zinc finger region" description="NR C4-type" evidence="3">
    <location>
        <begin position="115"/>
        <end position="134"/>
    </location>
</feature>
<feature type="region of interest" description="Disordered" evidence="5">
    <location>
        <begin position="1"/>
        <end position="67"/>
    </location>
</feature>
<feature type="compositionally biased region" description="Gly residues" evidence="5">
    <location>
        <begin position="58"/>
        <end position="67"/>
    </location>
</feature>
<feature type="modified residue" description="Phosphoserine" evidence="2">
    <location>
        <position position="19"/>
    </location>
</feature>
<feature type="modified residue" description="Phosphoserine" evidence="2">
    <location>
        <position position="22"/>
    </location>
</feature>
<feature type="modified residue" description="N6-acetyllysine; by PCAF/KAT2B" evidence="2">
    <location>
        <position position="129"/>
    </location>
</feature>
<feature type="modified residue" description="N6-acetyllysine; by PCAF/KAT2B" evidence="2">
    <location>
        <position position="138"/>
    </location>
</feature>
<feature type="modified residue" description="N6-acetyllysine; by PCAF/KAT2B" evidence="2">
    <location>
        <position position="160"/>
    </location>
</feature>
<feature type="modified residue" description="N6-acetyllysine; by PCAF/KAT2B" evidence="2">
    <location>
        <position position="162"/>
    </location>
</feature>
<feature type="cross-link" description="Glycyl lysine isopeptide (Lys-Gly) (interchain with G-Cter in SUMO2)" evidence="2">
    <location>
        <position position="189"/>
    </location>
</feature>
<feature type="cross-link" description="Glycyl lysine isopeptide (Lys-Gly) (interchain with G-Cter in SUMO2)" evidence="2">
    <location>
        <position position="402"/>
    </location>
</feature>
<organism>
    <name type="scientific">Canis lupus familiaris</name>
    <name type="common">Dog</name>
    <name type="synonym">Canis familiaris</name>
    <dbReference type="NCBI Taxonomy" id="9615"/>
    <lineage>
        <taxon>Eukaryota</taxon>
        <taxon>Metazoa</taxon>
        <taxon>Chordata</taxon>
        <taxon>Craniata</taxon>
        <taxon>Vertebrata</taxon>
        <taxon>Euteleostomi</taxon>
        <taxon>Mammalia</taxon>
        <taxon>Eutheria</taxon>
        <taxon>Laurasiatheria</taxon>
        <taxon>Carnivora</taxon>
        <taxon>Caniformia</taxon>
        <taxon>Canidae</taxon>
        <taxon>Canis</taxon>
    </lineage>
</organism>
<evidence type="ECO:0000250" key="1"/>
<evidence type="ECO:0000250" key="2">
    <source>
        <dbReference type="UniProtKB" id="P11474"/>
    </source>
</evidence>
<evidence type="ECO:0000255" key="3">
    <source>
        <dbReference type="PROSITE-ProRule" id="PRU00407"/>
    </source>
</evidence>
<evidence type="ECO:0000255" key="4">
    <source>
        <dbReference type="PROSITE-ProRule" id="PRU01189"/>
    </source>
</evidence>
<evidence type="ECO:0000256" key="5">
    <source>
        <dbReference type="SAM" id="MobiDB-lite"/>
    </source>
</evidence>
<evidence type="ECO:0000305" key="6"/>
<reference key="1">
    <citation type="submission" date="2004-01" db="EMBL/GenBank/DDBJ databases">
        <title>Dog estrogen related receptor alpha (Estrra) mRNA.</title>
        <authorList>
            <person name="Lu P."/>
            <person name="Colitz C."/>
        </authorList>
    </citation>
    <scope>NUCLEOTIDE SEQUENCE [MRNA]</scope>
</reference>
<accession>Q6QMY5</accession>
<comment type="function">
    <text evidence="1">Binds to an ERR-alpha response element (ERRE) containing a single consensus half-site, 5'-TNAAGGTCA-3'. Can bind to the medium-chain acyl coenzyme A dehydrogenase (MCAD) response element NRRE-1 and may act as an important regulator of MCAD promoter. May function as a modulator of the estrogen signaling pathway in the uterus. Induces the expression of PERM1 in the skeletal muscle (By similarity).</text>
</comment>
<comment type="subunit">
    <text evidence="2">Binds DNA as a monomer or a homodimer. Interacts (via the AF2 domain) with coactivator PPARGC1A (via the L3 motif); the interaction greatly enhances transcriptional activity of genes involved in energy metabolism. Interacts with PIAS4; the interaction enhances sumoylation. Interacts with MAPK15; promotes re-localization of ESRRA to the cytoplasm through a XPO1-dependent mechanism then inhibits ESRRA transcriptional activity.</text>
</comment>
<comment type="subcellular location">
    <subcellularLocation>
        <location evidence="2 3">Nucleus</location>
    </subcellularLocation>
    <subcellularLocation>
        <location evidence="2">Cytoplasm</location>
    </subcellularLocation>
    <text evidence="2">Co-localizes to the cytoplasm only in presence of MAPK15.</text>
</comment>
<comment type="PTM">
    <text evidence="1">Phosphorylation on Ser-19 enhances sumoylation on Lys-14 increasing repression of transcriptional activity.</text>
</comment>
<comment type="PTM">
    <text evidence="1">Sumoylated with SUMO2. Main site is Lys-14 which is enhanced by phosphorylation on Ser-19, cofactor activation, and by interaction with PIAS4. Sumoylation enhances repression of transcriptional activity, but has no effect on subcellular location nor on DNA binding (By similarity).</text>
</comment>
<comment type="PTM">
    <text evidence="1">Reversibly acetylated. Acetylation by PCAF/KAT2 at Lys-129, Lys-138, Lys-160 and Lys-162 and PCAF/KAT2 decreases transcriptional activity probably by inhibiting DNA-binding activity; deacetylation involves SIRT1 and HDAC8 and increases DNA-binding (By similarity).</text>
</comment>
<comment type="similarity">
    <text evidence="6">Belongs to the nuclear hormone receptor family. NR3 subfamily.</text>
</comment>
<keyword id="KW-0007">Acetylation</keyword>
<keyword id="KW-0963">Cytoplasm</keyword>
<keyword id="KW-0238">DNA-binding</keyword>
<keyword id="KW-1017">Isopeptide bond</keyword>
<keyword id="KW-0479">Metal-binding</keyword>
<keyword id="KW-0539">Nucleus</keyword>
<keyword id="KW-0597">Phosphoprotein</keyword>
<keyword id="KW-0675">Receptor</keyword>
<keyword id="KW-1185">Reference proteome</keyword>
<keyword id="KW-0804">Transcription</keyword>
<keyword id="KW-0805">Transcription regulation</keyword>
<keyword id="KW-0832">Ubl conjugation</keyword>
<keyword id="KW-0862">Zinc</keyword>
<keyword id="KW-0863">Zinc-finger</keyword>
<name>ERR1_CANLF</name>
<gene>
    <name type="primary">ESRRA</name>
    <name type="synonym">NR3B1</name>
</gene>
<dbReference type="EMBL" id="AY533243">
    <property type="protein sequence ID" value="AAS20260.1"/>
    <property type="molecule type" value="mRNA"/>
</dbReference>
<dbReference type="RefSeq" id="NP_001002936.1">
    <property type="nucleotide sequence ID" value="NM_001002936.1"/>
</dbReference>
<dbReference type="SMR" id="Q6QMY5"/>
<dbReference type="FunCoup" id="Q6QMY5">
    <property type="interactions" value="132"/>
</dbReference>
<dbReference type="STRING" id="9615.ENSCAFP00000021334"/>
<dbReference type="PaxDb" id="9612-ENSCAFP00000021334"/>
<dbReference type="GeneID" id="403169"/>
<dbReference type="KEGG" id="cfa:403169"/>
<dbReference type="CTD" id="2101"/>
<dbReference type="eggNOG" id="KOG3575">
    <property type="taxonomic scope" value="Eukaryota"/>
</dbReference>
<dbReference type="InParanoid" id="Q6QMY5"/>
<dbReference type="OrthoDB" id="5799427at2759"/>
<dbReference type="Proteomes" id="UP000002254">
    <property type="component" value="Unplaced"/>
</dbReference>
<dbReference type="Proteomes" id="UP000694429">
    <property type="component" value="Unplaced"/>
</dbReference>
<dbReference type="Proteomes" id="UP000694542">
    <property type="component" value="Unplaced"/>
</dbReference>
<dbReference type="Proteomes" id="UP000805418">
    <property type="component" value="Unplaced"/>
</dbReference>
<dbReference type="GO" id="GO:0000785">
    <property type="term" value="C:chromatin"/>
    <property type="evidence" value="ECO:0000318"/>
    <property type="project" value="GO_Central"/>
</dbReference>
<dbReference type="GO" id="GO:0005737">
    <property type="term" value="C:cytoplasm"/>
    <property type="evidence" value="ECO:0000250"/>
    <property type="project" value="UniProtKB"/>
</dbReference>
<dbReference type="GO" id="GO:0005634">
    <property type="term" value="C:nucleus"/>
    <property type="evidence" value="ECO:0000250"/>
    <property type="project" value="UniProtKB"/>
</dbReference>
<dbReference type="GO" id="GO:0003700">
    <property type="term" value="F:DNA-binding transcription factor activity"/>
    <property type="evidence" value="ECO:0000250"/>
    <property type="project" value="UniProtKB"/>
</dbReference>
<dbReference type="GO" id="GO:0034056">
    <property type="term" value="F:estrogen response element binding"/>
    <property type="evidence" value="ECO:0000318"/>
    <property type="project" value="GO_Central"/>
</dbReference>
<dbReference type="GO" id="GO:0004879">
    <property type="term" value="F:nuclear receptor activity"/>
    <property type="evidence" value="ECO:0000318"/>
    <property type="project" value="GO_Central"/>
</dbReference>
<dbReference type="GO" id="GO:0003707">
    <property type="term" value="F:nuclear steroid receptor activity"/>
    <property type="evidence" value="ECO:0007669"/>
    <property type="project" value="InterPro"/>
</dbReference>
<dbReference type="GO" id="GO:0043565">
    <property type="term" value="F:sequence-specific DNA binding"/>
    <property type="evidence" value="ECO:0000250"/>
    <property type="project" value="UniProtKB"/>
</dbReference>
<dbReference type="GO" id="GO:0005496">
    <property type="term" value="F:steroid binding"/>
    <property type="evidence" value="ECO:0007669"/>
    <property type="project" value="InterPro"/>
</dbReference>
<dbReference type="GO" id="GO:0008270">
    <property type="term" value="F:zinc ion binding"/>
    <property type="evidence" value="ECO:0007669"/>
    <property type="project" value="UniProtKB-KW"/>
</dbReference>
<dbReference type="GO" id="GO:0006355">
    <property type="term" value="P:regulation of DNA-templated transcription"/>
    <property type="evidence" value="ECO:0000250"/>
    <property type="project" value="UniProtKB"/>
</dbReference>
<dbReference type="GO" id="GO:0006357">
    <property type="term" value="P:regulation of transcription by RNA polymerase II"/>
    <property type="evidence" value="ECO:0000318"/>
    <property type="project" value="GO_Central"/>
</dbReference>
<dbReference type="CDD" id="cd07170">
    <property type="entry name" value="NR_DBD_ERR"/>
    <property type="match status" value="1"/>
</dbReference>
<dbReference type="CDD" id="cd06946">
    <property type="entry name" value="NR_LBD_ERR"/>
    <property type="match status" value="1"/>
</dbReference>
<dbReference type="FunFam" id="3.30.50.10:FF:000008">
    <property type="entry name" value="estrogen-related receptor gamma isoform X1"/>
    <property type="match status" value="1"/>
</dbReference>
<dbReference type="FunFam" id="1.10.565.10:FF:000023">
    <property type="entry name" value="Steroid hormone receptor ERR1"/>
    <property type="match status" value="1"/>
</dbReference>
<dbReference type="Gene3D" id="3.30.50.10">
    <property type="entry name" value="Erythroid Transcription Factor GATA-1, subunit A"/>
    <property type="match status" value="1"/>
</dbReference>
<dbReference type="Gene3D" id="1.10.565.10">
    <property type="entry name" value="Retinoid X Receptor"/>
    <property type="match status" value="1"/>
</dbReference>
<dbReference type="InterPro" id="IPR024178">
    <property type="entry name" value="Est_rcpt/est-rel_rcp"/>
</dbReference>
<dbReference type="InterPro" id="IPR035500">
    <property type="entry name" value="NHR-like_dom_sf"/>
</dbReference>
<dbReference type="InterPro" id="IPR000536">
    <property type="entry name" value="Nucl_hrmn_rcpt_lig-bd"/>
</dbReference>
<dbReference type="InterPro" id="IPR050200">
    <property type="entry name" value="Nuclear_hormone_rcpt_NR3"/>
</dbReference>
<dbReference type="InterPro" id="IPR001723">
    <property type="entry name" value="Nuclear_hrmn_rcpt"/>
</dbReference>
<dbReference type="InterPro" id="IPR027289">
    <property type="entry name" value="Oest-rel_rcp"/>
</dbReference>
<dbReference type="InterPro" id="IPR001628">
    <property type="entry name" value="Znf_hrmn_rcpt"/>
</dbReference>
<dbReference type="InterPro" id="IPR013088">
    <property type="entry name" value="Znf_NHR/GATA"/>
</dbReference>
<dbReference type="PANTHER" id="PTHR48092">
    <property type="entry name" value="KNIRPS-RELATED PROTEIN-RELATED"/>
    <property type="match status" value="1"/>
</dbReference>
<dbReference type="Pfam" id="PF00104">
    <property type="entry name" value="Hormone_recep"/>
    <property type="match status" value="1"/>
</dbReference>
<dbReference type="Pfam" id="PF00105">
    <property type="entry name" value="zf-C4"/>
    <property type="match status" value="1"/>
</dbReference>
<dbReference type="PIRSF" id="PIRSF002527">
    <property type="entry name" value="ER-like_NR"/>
    <property type="match status" value="1"/>
</dbReference>
<dbReference type="PIRSF" id="PIRSF500939">
    <property type="entry name" value="ERR1-2-3"/>
    <property type="match status" value="1"/>
</dbReference>
<dbReference type="PRINTS" id="PR00398">
    <property type="entry name" value="STRDHORMONER"/>
</dbReference>
<dbReference type="PRINTS" id="PR00047">
    <property type="entry name" value="STROIDFINGER"/>
</dbReference>
<dbReference type="SMART" id="SM00430">
    <property type="entry name" value="HOLI"/>
    <property type="match status" value="1"/>
</dbReference>
<dbReference type="SMART" id="SM00399">
    <property type="entry name" value="ZnF_C4"/>
    <property type="match status" value="1"/>
</dbReference>
<dbReference type="SUPFAM" id="SSF57716">
    <property type="entry name" value="Glucocorticoid receptor-like (DNA-binding domain)"/>
    <property type="match status" value="1"/>
</dbReference>
<dbReference type="SUPFAM" id="SSF48508">
    <property type="entry name" value="Nuclear receptor ligand-binding domain"/>
    <property type="match status" value="1"/>
</dbReference>
<dbReference type="PROSITE" id="PS51843">
    <property type="entry name" value="NR_LBD"/>
    <property type="match status" value="1"/>
</dbReference>
<dbReference type="PROSITE" id="PS00031">
    <property type="entry name" value="NUCLEAR_REC_DBD_1"/>
    <property type="match status" value="1"/>
</dbReference>
<dbReference type="PROSITE" id="PS51030">
    <property type="entry name" value="NUCLEAR_REC_DBD_2"/>
    <property type="match status" value="1"/>
</dbReference>